<protein>
    <recommendedName>
        <fullName>Cytochrome c oxidase polypeptide 6, mitochondrial</fullName>
    </recommendedName>
    <alternativeName>
        <fullName>Cytochrome c oxidase polypeptide VI</fullName>
    </alternativeName>
</protein>
<feature type="initiator methionine" description="Removed" evidence="3">
    <location>
        <position position="1"/>
    </location>
</feature>
<feature type="chain" id="PRO_0000194086" description="Cytochrome c oxidase polypeptide 6, mitochondrial">
    <location>
        <begin position="2"/>
        <end position="93"/>
    </location>
</feature>
<feature type="topological domain" description="Mitochondrial matrix" evidence="1">
    <location>
        <begin position="2"/>
        <end position="33"/>
    </location>
</feature>
<feature type="transmembrane region" description="Helical" evidence="2">
    <location>
        <begin position="34"/>
        <end position="53"/>
    </location>
</feature>
<feature type="topological domain" description="Mitochondrial intermembrane" evidence="1">
    <location>
        <begin position="54"/>
        <end position="93"/>
    </location>
</feature>
<proteinExistence type="evidence at protein level"/>
<accession>P26310</accession>
<accession>Q54T04</accession>
<evidence type="ECO:0000250" key="1">
    <source>
        <dbReference type="UniProtKB" id="P00424"/>
    </source>
</evidence>
<evidence type="ECO:0000255" key="2"/>
<evidence type="ECO:0000269" key="3">
    <source>
    </source>
</evidence>
<evidence type="ECO:0000305" key="4"/>
<gene>
    <name type="primary">cxfA</name>
    <name type="synonym">cox6</name>
    <name type="ORF">DDB_G0282097</name>
</gene>
<sequence>MSTGNESYNLRYPKGFKGYPYNMYKLEGYGTPKGYITLIGVVATLTVSGLFFAKTRSNKREYPTHNKEWRAKTLAYAKETNADPIYQLPKDKI</sequence>
<name>COX6_DICDI</name>
<reference key="1">
    <citation type="journal article" date="1991" name="Biochim. Biophys. Acta">
        <title>Characterization of a cDNA encoding subunit VI of cytochrome c oxidase from the slime mold Dictyostelium discoideum.</title>
        <authorList>
            <person name="Rizzuto R."/>
            <person name="Sandona D."/>
            <person name="Capaldi R.A."/>
            <person name="Bisson R."/>
        </authorList>
    </citation>
    <scope>NUCLEOTIDE SEQUENCE [MRNA]</scope>
    <scope>PROTEIN SEQUENCE OF 2-18</scope>
    <source>
        <strain>AX3</strain>
    </source>
</reference>
<reference key="2">
    <citation type="journal article" date="2005" name="Nature">
        <title>The genome of the social amoeba Dictyostelium discoideum.</title>
        <authorList>
            <person name="Eichinger L."/>
            <person name="Pachebat J.A."/>
            <person name="Gloeckner G."/>
            <person name="Rajandream M.A."/>
            <person name="Sucgang R."/>
            <person name="Berriman M."/>
            <person name="Song J."/>
            <person name="Olsen R."/>
            <person name="Szafranski K."/>
            <person name="Xu Q."/>
            <person name="Tunggal B."/>
            <person name="Kummerfeld S."/>
            <person name="Madera M."/>
            <person name="Konfortov B.A."/>
            <person name="Rivero F."/>
            <person name="Bankier A.T."/>
            <person name="Lehmann R."/>
            <person name="Hamlin N."/>
            <person name="Davies R."/>
            <person name="Gaudet P."/>
            <person name="Fey P."/>
            <person name="Pilcher K."/>
            <person name="Chen G."/>
            <person name="Saunders D."/>
            <person name="Sodergren E.J."/>
            <person name="Davis P."/>
            <person name="Kerhornou A."/>
            <person name="Nie X."/>
            <person name="Hall N."/>
            <person name="Anjard C."/>
            <person name="Hemphill L."/>
            <person name="Bason N."/>
            <person name="Farbrother P."/>
            <person name="Desany B."/>
            <person name="Just E."/>
            <person name="Morio T."/>
            <person name="Rost R."/>
            <person name="Churcher C.M."/>
            <person name="Cooper J."/>
            <person name="Haydock S."/>
            <person name="van Driessche N."/>
            <person name="Cronin A."/>
            <person name="Goodhead I."/>
            <person name="Muzny D.M."/>
            <person name="Mourier T."/>
            <person name="Pain A."/>
            <person name="Lu M."/>
            <person name="Harper D."/>
            <person name="Lindsay R."/>
            <person name="Hauser H."/>
            <person name="James K.D."/>
            <person name="Quiles M."/>
            <person name="Madan Babu M."/>
            <person name="Saito T."/>
            <person name="Buchrieser C."/>
            <person name="Wardroper A."/>
            <person name="Felder M."/>
            <person name="Thangavelu M."/>
            <person name="Johnson D."/>
            <person name="Knights A."/>
            <person name="Loulseged H."/>
            <person name="Mungall K.L."/>
            <person name="Oliver K."/>
            <person name="Price C."/>
            <person name="Quail M.A."/>
            <person name="Urushihara H."/>
            <person name="Hernandez J."/>
            <person name="Rabbinowitsch E."/>
            <person name="Steffen D."/>
            <person name="Sanders M."/>
            <person name="Ma J."/>
            <person name="Kohara Y."/>
            <person name="Sharp S."/>
            <person name="Simmonds M.N."/>
            <person name="Spiegler S."/>
            <person name="Tivey A."/>
            <person name="Sugano S."/>
            <person name="White B."/>
            <person name="Walker D."/>
            <person name="Woodward J.R."/>
            <person name="Winckler T."/>
            <person name="Tanaka Y."/>
            <person name="Shaulsky G."/>
            <person name="Schleicher M."/>
            <person name="Weinstock G.M."/>
            <person name="Rosenthal A."/>
            <person name="Cox E.C."/>
            <person name="Chisholm R.L."/>
            <person name="Gibbs R.A."/>
            <person name="Loomis W.F."/>
            <person name="Platzer M."/>
            <person name="Kay R.R."/>
            <person name="Williams J.G."/>
            <person name="Dear P.H."/>
            <person name="Noegel A.A."/>
            <person name="Barrell B.G."/>
            <person name="Kuspa A."/>
        </authorList>
    </citation>
    <scope>NUCLEOTIDE SEQUENCE [LARGE SCALE GENOMIC DNA]</scope>
    <source>
        <strain>AX4</strain>
    </source>
</reference>
<comment type="function">
    <text evidence="1">Component of the cytochrome c oxidase, the last enzyme in the mitochondrial electron transport chain which drives oxidative phosphorylation. The respiratory chain contains 3 multisubunit complexes succinate dehydrogenase (complex II, CII), ubiquinol-cytochrome c oxidoreductase (cytochrome b-c1 complex, complex III, CIII) and cytochrome c oxidase (complex IV, CIV), that cooperate to transfer electrons derived from NADH and succinate to molecular oxygen, creating an electrochemical gradient over the inner membrane that drives transmembrane transport and the ATP synthase. Cytochrome c oxidase is the component of the respiratory chain that catalyzes the reduction of oxygen to water. Electrons originating from reduced cytochrome c in the intermembrane space (IMS) are transferred via the dinuclear copper A center (CU(A)) of subunit 2 and heme A of subunit 1 to the active site in subunit 1, a binuclear center (BNC) formed by heme A3 and copper B (CU(B)). The BNC reduces molecular oxygen to 2 water molecules using 4 electrons from cytochrome c in the IMS and 4 protons from the mitochondrial matrix.</text>
</comment>
<comment type="pathway">
    <text evidence="1">Energy metabolism; oxidative phosphorylation.</text>
</comment>
<comment type="subunit">
    <text evidence="1">Component of the cytochrome c oxidase (complex IV, CIV), a multisubunit enzyme composed of a catalytic core of 3 subunits and seevral supernumerary subunits. The complex exists as a monomer or a dimer and forms supercomplexes (SCs) in the inner mitochondrial membrane with ubiquinol-cytochrome c oxidoreductase (cytochrome b-c1 complex, complex III, CIII).</text>
</comment>
<comment type="subcellular location">
    <subcellularLocation>
        <location evidence="1">Mitochondrion inner membrane</location>
        <topology evidence="1">Single-pass membrane protein</topology>
    </subcellularLocation>
</comment>
<comment type="similarity">
    <text evidence="4">Belongs to the cytochrome c oxidase IV family.</text>
</comment>
<keyword id="KW-0903">Direct protein sequencing</keyword>
<keyword id="KW-0472">Membrane</keyword>
<keyword id="KW-0496">Mitochondrion</keyword>
<keyword id="KW-0999">Mitochondrion inner membrane</keyword>
<keyword id="KW-0560">Oxidoreductase</keyword>
<keyword id="KW-1185">Reference proteome</keyword>
<keyword id="KW-0812">Transmembrane</keyword>
<keyword id="KW-1133">Transmembrane helix</keyword>
<organism>
    <name type="scientific">Dictyostelium discoideum</name>
    <name type="common">Social amoeba</name>
    <dbReference type="NCBI Taxonomy" id="44689"/>
    <lineage>
        <taxon>Eukaryota</taxon>
        <taxon>Amoebozoa</taxon>
        <taxon>Evosea</taxon>
        <taxon>Eumycetozoa</taxon>
        <taxon>Dictyostelia</taxon>
        <taxon>Dictyosteliales</taxon>
        <taxon>Dictyosteliaceae</taxon>
        <taxon>Dictyostelium</taxon>
    </lineage>
</organism>
<dbReference type="EMBL" id="X55672">
    <property type="protein sequence ID" value="CAA39207.1"/>
    <property type="molecule type" value="mRNA"/>
</dbReference>
<dbReference type="EMBL" id="AAFI02000045">
    <property type="protein sequence ID" value="EAL66374.1"/>
    <property type="molecule type" value="Genomic_DNA"/>
</dbReference>
<dbReference type="PIR" id="S17190">
    <property type="entry name" value="OGDO6"/>
</dbReference>
<dbReference type="RefSeq" id="XP_640351.1">
    <property type="nucleotide sequence ID" value="XM_635259.1"/>
</dbReference>
<dbReference type="SMR" id="P26310"/>
<dbReference type="FunCoup" id="P26310">
    <property type="interactions" value="744"/>
</dbReference>
<dbReference type="STRING" id="44689.P26310"/>
<dbReference type="PaxDb" id="44689-DDB0215013"/>
<dbReference type="EnsemblProtists" id="EAL66374">
    <property type="protein sequence ID" value="EAL66374"/>
    <property type="gene ID" value="DDB_G0282097"/>
</dbReference>
<dbReference type="GeneID" id="8623406"/>
<dbReference type="KEGG" id="ddi:DDB_G0282097"/>
<dbReference type="dictyBase" id="DDB_G0282097">
    <property type="gene designation" value="cxfA"/>
</dbReference>
<dbReference type="VEuPathDB" id="AmoebaDB:DDB_G0282097"/>
<dbReference type="eggNOG" id="ENOG502RIDF">
    <property type="taxonomic scope" value="Eukaryota"/>
</dbReference>
<dbReference type="HOGENOM" id="CLU_2404152_0_0_1"/>
<dbReference type="InParanoid" id="P26310"/>
<dbReference type="OMA" id="RYPKGFK"/>
<dbReference type="UniPathway" id="UPA00705"/>
<dbReference type="PRO" id="PR:P26310"/>
<dbReference type="Proteomes" id="UP000002195">
    <property type="component" value="Chromosome 3"/>
</dbReference>
<dbReference type="GO" id="GO:0005743">
    <property type="term" value="C:mitochondrial inner membrane"/>
    <property type="evidence" value="ECO:0007669"/>
    <property type="project" value="UniProtKB-SubCell"/>
</dbReference>
<dbReference type="GO" id="GO:0016491">
    <property type="term" value="F:oxidoreductase activity"/>
    <property type="evidence" value="ECO:0007669"/>
    <property type="project" value="UniProtKB-KW"/>
</dbReference>
<dbReference type="GO" id="GO:0006119">
    <property type="term" value="P:oxidative phosphorylation"/>
    <property type="evidence" value="ECO:0007669"/>
    <property type="project" value="UniProtKB-UniPathway"/>
</dbReference>